<keyword id="KW-0937">Abscisic acid biosynthesis</keyword>
<keyword id="KW-0025">Alternative splicing</keyword>
<keyword id="KW-0067">ATP-binding</keyword>
<keyword id="KW-0927">Auxin signaling pathway</keyword>
<keyword id="KW-1070">Brassinosteroid signaling pathway</keyword>
<keyword id="KW-0963">Cytoplasm</keyword>
<keyword id="KW-0217">Developmental protein</keyword>
<keyword id="KW-0341">Growth regulation</keyword>
<keyword id="KW-0945">Host-virus interaction</keyword>
<keyword id="KW-0418">Kinase</keyword>
<keyword id="KW-0547">Nucleotide-binding</keyword>
<keyword id="KW-0539">Nucleus</keyword>
<keyword id="KW-0597">Phosphoprotein</keyword>
<keyword id="KW-0611">Plant defense</keyword>
<keyword id="KW-1185">Reference proteome</keyword>
<keyword id="KW-0677">Repeat</keyword>
<keyword id="KW-0723">Serine/threonine-protein kinase</keyword>
<keyword id="KW-0808">Transferase</keyword>
<dbReference type="EC" id="2.7.11.1" evidence="1"/>
<dbReference type="EMBL" id="AF178967">
    <property type="protein sequence ID" value="AAG43423.1"/>
    <property type="molecule type" value="mRNA"/>
</dbReference>
<dbReference type="EMBL" id="AC015445">
    <property type="protein sequence ID" value="AAF76442.1"/>
    <property type="status" value="ALT_SEQ"/>
    <property type="molecule type" value="Genomic_DNA"/>
</dbReference>
<dbReference type="EMBL" id="CP002684">
    <property type="protein sequence ID" value="AEE32509.1"/>
    <property type="molecule type" value="Genomic_DNA"/>
</dbReference>
<dbReference type="PIR" id="G96536">
    <property type="entry name" value="G96536"/>
</dbReference>
<dbReference type="RefSeq" id="NP_175425.2">
    <molecule id="Q9FR53-1"/>
    <property type="nucleotide sequence ID" value="NM_103891.4"/>
</dbReference>
<dbReference type="SMR" id="Q9FR53"/>
<dbReference type="BioGRID" id="26652">
    <property type="interactions" value="8"/>
</dbReference>
<dbReference type="DIP" id="DIP-39421N"/>
<dbReference type="FunCoup" id="Q9FR53">
    <property type="interactions" value="4121"/>
</dbReference>
<dbReference type="IntAct" id="Q9FR53">
    <property type="interactions" value="12"/>
</dbReference>
<dbReference type="MINT" id="Q9FR53"/>
<dbReference type="STRING" id="3702.Q9FR53"/>
<dbReference type="iPTMnet" id="Q9FR53"/>
<dbReference type="PaxDb" id="3702-AT1G50030.1"/>
<dbReference type="ProteomicsDB" id="228408">
    <molecule id="Q9FR53-1"/>
</dbReference>
<dbReference type="EnsemblPlants" id="AT1G50030.1">
    <molecule id="Q9FR53-1"/>
    <property type="protein sequence ID" value="AT1G50030.1"/>
    <property type="gene ID" value="AT1G50030"/>
</dbReference>
<dbReference type="GeneID" id="841427"/>
<dbReference type="Gramene" id="AT1G50030.1">
    <molecule id="Q9FR53-1"/>
    <property type="protein sequence ID" value="AT1G50030.1"/>
    <property type="gene ID" value="AT1G50030"/>
</dbReference>
<dbReference type="KEGG" id="ath:AT1G50030"/>
<dbReference type="Araport" id="AT1G50030"/>
<dbReference type="TAIR" id="AT1G50030">
    <property type="gene designation" value="TOR"/>
</dbReference>
<dbReference type="eggNOG" id="KOG0891">
    <property type="taxonomic scope" value="Eukaryota"/>
</dbReference>
<dbReference type="InParanoid" id="Q9FR53"/>
<dbReference type="OMA" id="MRQHSAK"/>
<dbReference type="OrthoDB" id="381190at2759"/>
<dbReference type="PhylomeDB" id="Q9FR53"/>
<dbReference type="PRO" id="PR:Q9FR53"/>
<dbReference type="Proteomes" id="UP000006548">
    <property type="component" value="Chromosome 1"/>
</dbReference>
<dbReference type="ExpressionAtlas" id="Q9FR53">
    <property type="expression patterns" value="baseline and differential"/>
</dbReference>
<dbReference type="GO" id="GO:0005737">
    <property type="term" value="C:cytoplasm"/>
    <property type="evidence" value="ECO:0000314"/>
    <property type="project" value="UniProtKB"/>
</dbReference>
<dbReference type="GO" id="GO:0005634">
    <property type="term" value="C:nucleus"/>
    <property type="evidence" value="ECO:0000314"/>
    <property type="project" value="UniProtKB"/>
</dbReference>
<dbReference type="GO" id="GO:0005840">
    <property type="term" value="C:ribosome"/>
    <property type="evidence" value="ECO:0000314"/>
    <property type="project" value="UniProtKB"/>
</dbReference>
<dbReference type="GO" id="GO:0016303">
    <property type="term" value="F:1-phosphatidylinositol-3-kinase activity"/>
    <property type="evidence" value="ECO:0000250"/>
    <property type="project" value="TAIR"/>
</dbReference>
<dbReference type="GO" id="GO:0005524">
    <property type="term" value="F:ATP binding"/>
    <property type="evidence" value="ECO:0007669"/>
    <property type="project" value="UniProtKB-KW"/>
</dbReference>
<dbReference type="GO" id="GO:0042802">
    <property type="term" value="F:identical protein binding"/>
    <property type="evidence" value="ECO:0000353"/>
    <property type="project" value="UniProtKB"/>
</dbReference>
<dbReference type="GO" id="GO:0004672">
    <property type="term" value="F:protein kinase activity"/>
    <property type="evidence" value="ECO:0000314"/>
    <property type="project" value="UniProtKB"/>
</dbReference>
<dbReference type="GO" id="GO:0106310">
    <property type="term" value="F:protein serine kinase activity"/>
    <property type="evidence" value="ECO:0007669"/>
    <property type="project" value="RHEA"/>
</dbReference>
<dbReference type="GO" id="GO:0004674">
    <property type="term" value="F:protein serine/threonine kinase activity"/>
    <property type="evidence" value="ECO:0007669"/>
    <property type="project" value="UniProtKB-KW"/>
</dbReference>
<dbReference type="GO" id="GO:0044877">
    <property type="term" value="F:protein-containing complex binding"/>
    <property type="evidence" value="ECO:0007669"/>
    <property type="project" value="InterPro"/>
</dbReference>
<dbReference type="GO" id="GO:0000976">
    <property type="term" value="F:transcription cis-regulatory region binding"/>
    <property type="evidence" value="ECO:0000314"/>
    <property type="project" value="UniProtKB"/>
</dbReference>
<dbReference type="GO" id="GO:0009688">
    <property type="term" value="P:abscisic acid biosynthetic process"/>
    <property type="evidence" value="ECO:0007669"/>
    <property type="project" value="UniProtKB-KW"/>
</dbReference>
<dbReference type="GO" id="GO:0009734">
    <property type="term" value="P:auxin-activated signaling pathway"/>
    <property type="evidence" value="ECO:0007669"/>
    <property type="project" value="UniProtKB-KW"/>
</dbReference>
<dbReference type="GO" id="GO:0009742">
    <property type="term" value="P:brassinosteroid mediated signaling pathway"/>
    <property type="evidence" value="ECO:0007669"/>
    <property type="project" value="UniProtKB-KW"/>
</dbReference>
<dbReference type="GO" id="GO:0006952">
    <property type="term" value="P:defense response"/>
    <property type="evidence" value="ECO:0007669"/>
    <property type="project" value="UniProtKB-KW"/>
</dbReference>
<dbReference type="GO" id="GO:0016311">
    <property type="term" value="P:dephosphorylation"/>
    <property type="evidence" value="ECO:0000315"/>
    <property type="project" value="TAIR"/>
</dbReference>
<dbReference type="GO" id="GO:0009793">
    <property type="term" value="P:embryo development ending in seed dormancy"/>
    <property type="evidence" value="ECO:0000315"/>
    <property type="project" value="TAIR"/>
</dbReference>
<dbReference type="GO" id="GO:0009630">
    <property type="term" value="P:gravitropism"/>
    <property type="evidence" value="ECO:0000315"/>
    <property type="project" value="UniProtKB"/>
</dbReference>
<dbReference type="GO" id="GO:0010507">
    <property type="term" value="P:negative regulation of autophagy"/>
    <property type="evidence" value="ECO:0000315"/>
    <property type="project" value="UniProtKB"/>
</dbReference>
<dbReference type="GO" id="GO:0050687">
    <property type="term" value="P:negative regulation of defense response to virus"/>
    <property type="evidence" value="ECO:0000315"/>
    <property type="project" value="UniProtKB"/>
</dbReference>
<dbReference type="GO" id="GO:0010116">
    <property type="term" value="P:positive regulation of abscisic acid biosynthetic process"/>
    <property type="evidence" value="ECO:0000315"/>
    <property type="project" value="UniProtKB"/>
</dbReference>
<dbReference type="GO" id="GO:0010929">
    <property type="term" value="P:positive regulation of auxin mediated signaling pathway"/>
    <property type="evidence" value="ECO:0000314"/>
    <property type="project" value="UniProtKB"/>
</dbReference>
<dbReference type="GO" id="GO:1900459">
    <property type="term" value="P:positive regulation of brassinosteroid mediated signaling pathway"/>
    <property type="evidence" value="ECO:0000315"/>
    <property type="project" value="UniProtKB"/>
</dbReference>
<dbReference type="GO" id="GO:0030307">
    <property type="term" value="P:positive regulation of cell growth"/>
    <property type="evidence" value="ECO:0000315"/>
    <property type="project" value="UniProtKB"/>
</dbReference>
<dbReference type="GO" id="GO:0045893">
    <property type="term" value="P:positive regulation of DNA-templated transcription"/>
    <property type="evidence" value="ECO:0000315"/>
    <property type="project" value="UniProtKB"/>
</dbReference>
<dbReference type="GO" id="GO:0040019">
    <property type="term" value="P:positive regulation of embryonic development"/>
    <property type="evidence" value="ECO:0000315"/>
    <property type="project" value="UniProtKB"/>
</dbReference>
<dbReference type="GO" id="GO:1902661">
    <property type="term" value="P:positive regulation of glucose mediated signaling pathway"/>
    <property type="evidence" value="ECO:0000315"/>
    <property type="project" value="UniProtKB"/>
</dbReference>
<dbReference type="GO" id="GO:2000234">
    <property type="term" value="P:positive regulation of rRNA processing"/>
    <property type="evidence" value="ECO:0000315"/>
    <property type="project" value="UniProtKB"/>
</dbReference>
<dbReference type="GO" id="GO:0009791">
    <property type="term" value="P:post-embryonic development"/>
    <property type="evidence" value="ECO:0000315"/>
    <property type="project" value="TAIR"/>
</dbReference>
<dbReference type="GO" id="GO:0009733">
    <property type="term" value="P:response to auxin"/>
    <property type="evidence" value="ECO:0000314"/>
    <property type="project" value="UniProtKB"/>
</dbReference>
<dbReference type="GO" id="GO:1901355">
    <property type="term" value="P:response to rapamycin"/>
    <property type="evidence" value="ECO:0000314"/>
    <property type="project" value="UniProtKB"/>
</dbReference>
<dbReference type="GO" id="GO:0009615">
    <property type="term" value="P:response to virus"/>
    <property type="evidence" value="ECO:0000314"/>
    <property type="project" value="UniProtKB"/>
</dbReference>
<dbReference type="GO" id="GO:0009303">
    <property type="term" value="P:rRNA transcription"/>
    <property type="evidence" value="ECO:0000315"/>
    <property type="project" value="TAIR"/>
</dbReference>
<dbReference type="GO" id="GO:0009745">
    <property type="term" value="P:sucrose mediated signaling"/>
    <property type="evidence" value="ECO:0000315"/>
    <property type="project" value="UniProtKB"/>
</dbReference>
<dbReference type="CDD" id="cd05169">
    <property type="entry name" value="PIKKc_TOR"/>
    <property type="match status" value="1"/>
</dbReference>
<dbReference type="FunFam" id="1.10.1070.11:FF:000017">
    <property type="entry name" value="Serine/threonine-protein kinase TOR"/>
    <property type="match status" value="1"/>
</dbReference>
<dbReference type="FunFam" id="1.20.120.150:FF:000001">
    <property type="entry name" value="Serine/threonine-protein kinase TOR"/>
    <property type="match status" value="1"/>
</dbReference>
<dbReference type="FunFam" id="1.25.10.10:FF:000265">
    <property type="entry name" value="Serine/threonine-protein kinase TOR"/>
    <property type="match status" value="1"/>
</dbReference>
<dbReference type="FunFam" id="1.25.10.10:FF:000284">
    <property type="entry name" value="Serine/threonine-protein kinase TOR"/>
    <property type="match status" value="1"/>
</dbReference>
<dbReference type="FunFam" id="1.25.10.10:FF:000288">
    <property type="entry name" value="Serine/threonine-protein kinase TOR"/>
    <property type="match status" value="1"/>
</dbReference>
<dbReference type="FunFam" id="1.25.10.10:FF:000474">
    <property type="entry name" value="Serine/threonine-protein kinase TOR"/>
    <property type="match status" value="1"/>
</dbReference>
<dbReference type="FunFam" id="1.25.10.10:FF:000802">
    <property type="entry name" value="Serine/threonine-protein kinase TOR"/>
    <property type="match status" value="1"/>
</dbReference>
<dbReference type="FunFam" id="3.30.1010.10:FF:000006">
    <property type="entry name" value="Serine/threonine-protein kinase TOR"/>
    <property type="match status" value="1"/>
</dbReference>
<dbReference type="Gene3D" id="1.20.120.150">
    <property type="entry name" value="FKBP12-rapamycin binding domain"/>
    <property type="match status" value="1"/>
</dbReference>
<dbReference type="Gene3D" id="1.25.10.10">
    <property type="entry name" value="Leucine-rich Repeat Variant"/>
    <property type="match status" value="6"/>
</dbReference>
<dbReference type="Gene3D" id="1.10.1070.11">
    <property type="entry name" value="Phosphatidylinositol 3-/4-kinase, catalytic domain"/>
    <property type="match status" value="1"/>
</dbReference>
<dbReference type="Gene3D" id="3.30.1010.10">
    <property type="entry name" value="Phosphatidylinositol 3-kinase Catalytic Subunit, Chain A, domain 4"/>
    <property type="match status" value="1"/>
</dbReference>
<dbReference type="Gene3D" id="1.25.40.10">
    <property type="entry name" value="Tetratricopeptide repeat domain"/>
    <property type="match status" value="1"/>
</dbReference>
<dbReference type="InterPro" id="IPR011989">
    <property type="entry name" value="ARM-like"/>
</dbReference>
<dbReference type="InterPro" id="IPR016024">
    <property type="entry name" value="ARM-type_fold"/>
</dbReference>
<dbReference type="InterPro" id="IPR050517">
    <property type="entry name" value="DDR_Repair_Kinase"/>
</dbReference>
<dbReference type="InterPro" id="IPR003152">
    <property type="entry name" value="FATC_dom"/>
</dbReference>
<dbReference type="InterPro" id="IPR009076">
    <property type="entry name" value="FRB_dom"/>
</dbReference>
<dbReference type="InterPro" id="IPR036738">
    <property type="entry name" value="FRB_sf"/>
</dbReference>
<dbReference type="InterPro" id="IPR011009">
    <property type="entry name" value="Kinase-like_dom_sf"/>
</dbReference>
<dbReference type="InterPro" id="IPR024585">
    <property type="entry name" value="mTOR_dom"/>
</dbReference>
<dbReference type="InterPro" id="IPR000403">
    <property type="entry name" value="PI3/4_kinase_cat_dom"/>
</dbReference>
<dbReference type="InterPro" id="IPR036940">
    <property type="entry name" value="PI3/4_kinase_cat_sf"/>
</dbReference>
<dbReference type="InterPro" id="IPR018936">
    <property type="entry name" value="PI3/4_kinase_CS"/>
</dbReference>
<dbReference type="InterPro" id="IPR003151">
    <property type="entry name" value="PIK-rel_kinase_FAT"/>
</dbReference>
<dbReference type="InterPro" id="IPR014009">
    <property type="entry name" value="PIK_FAT"/>
</dbReference>
<dbReference type="InterPro" id="IPR026683">
    <property type="entry name" value="TOR_cat"/>
</dbReference>
<dbReference type="InterPro" id="IPR011990">
    <property type="entry name" value="TPR-like_helical_dom_sf"/>
</dbReference>
<dbReference type="PANTHER" id="PTHR11139">
    <property type="entry name" value="ATAXIA TELANGIECTASIA MUTATED ATM -RELATED"/>
    <property type="match status" value="1"/>
</dbReference>
<dbReference type="PANTHER" id="PTHR11139:SF9">
    <property type="entry name" value="SERINE_THREONINE-PROTEIN KINASE MTOR"/>
    <property type="match status" value="1"/>
</dbReference>
<dbReference type="Pfam" id="PF02259">
    <property type="entry name" value="FAT"/>
    <property type="match status" value="1"/>
</dbReference>
<dbReference type="Pfam" id="PF02260">
    <property type="entry name" value="FATC"/>
    <property type="match status" value="1"/>
</dbReference>
<dbReference type="Pfam" id="PF08771">
    <property type="entry name" value="FRB_dom"/>
    <property type="match status" value="1"/>
</dbReference>
<dbReference type="Pfam" id="PF23593">
    <property type="entry name" value="HEAT_ATR"/>
    <property type="match status" value="1"/>
</dbReference>
<dbReference type="Pfam" id="PF11865">
    <property type="entry name" value="mTOR_dom"/>
    <property type="match status" value="1"/>
</dbReference>
<dbReference type="Pfam" id="PF00454">
    <property type="entry name" value="PI3_PI4_kinase"/>
    <property type="match status" value="1"/>
</dbReference>
<dbReference type="SMART" id="SM01346">
    <property type="entry name" value="DUF3385"/>
    <property type="match status" value="1"/>
</dbReference>
<dbReference type="SMART" id="SM01343">
    <property type="entry name" value="FATC"/>
    <property type="match status" value="1"/>
</dbReference>
<dbReference type="SMART" id="SM00146">
    <property type="entry name" value="PI3Kc"/>
    <property type="match status" value="1"/>
</dbReference>
<dbReference type="SMART" id="SM01345">
    <property type="entry name" value="Rapamycin_bind"/>
    <property type="match status" value="1"/>
</dbReference>
<dbReference type="SUPFAM" id="SSF48371">
    <property type="entry name" value="ARM repeat"/>
    <property type="match status" value="2"/>
</dbReference>
<dbReference type="SUPFAM" id="SSF47212">
    <property type="entry name" value="FKBP12-rapamycin-binding domain of FKBP-rapamycin-associated protein (FRAP)"/>
    <property type="match status" value="1"/>
</dbReference>
<dbReference type="SUPFAM" id="SSF56112">
    <property type="entry name" value="Protein kinase-like (PK-like)"/>
    <property type="match status" value="1"/>
</dbReference>
<dbReference type="PROSITE" id="PS51189">
    <property type="entry name" value="FAT"/>
    <property type="match status" value="1"/>
</dbReference>
<dbReference type="PROSITE" id="PS51190">
    <property type="entry name" value="FATC"/>
    <property type="match status" value="1"/>
</dbReference>
<dbReference type="PROSITE" id="PS00915">
    <property type="entry name" value="PI3_4_KINASE_1"/>
    <property type="match status" value="1"/>
</dbReference>
<dbReference type="PROSITE" id="PS00916">
    <property type="entry name" value="PI3_4_KINASE_2"/>
    <property type="match status" value="1"/>
</dbReference>
<dbReference type="PROSITE" id="PS50290">
    <property type="entry name" value="PI3_4_KINASE_3"/>
    <property type="match status" value="1"/>
</dbReference>
<accession>Q9FR53</accession>
<accession>Q9LPM4</accession>
<proteinExistence type="evidence at protein level"/>
<comment type="function">
    <text evidence="8 11 12 13 14 15 16 18 21 22 23 24 27 28 30 31 32">Essential cell growth regulator that controls development from early embryo to seed production. Controls plant growth in environmental stress conditions. Acts through the phosphorylation of downstream effectors that are recruited by the binding partner RAPTOR. Acts by activating transcription, protein synthesis and ribosome biogenesis, and inhibiting mRNA degradation and autophagy. Can phosphorylate TAP46, a regulatory subunit of protein phosphatase 2A that modulates cell growth and survival (PubMed:21216945). Involved in modulating the transition from heterotrophic to photoautotrophic growth by regulating the expression of chloroplast- and photosynthesis-associated genes (PubMed:27479935). Essential for auxin signaling transduction, probably acting in polysomes to maintain the active ATPK1/S6K1 (and thus TIF3H1/eIF3h) phosphorylation status that is critical for translation reinitiation (e.g. uORF-mRNAs loading) (PubMed:23524850, PubMed:27014314). Promotes abscisic acid (ABA) biosynthesis (PubMed:26459592). Involved in the regulation of sugar-mediated (e.g. glucose and sucrose) glycolysis- and mitochondrial bioenergetics-dependent root growth promotion (PubMed:23542588). Required for sugar (e.g. glucose) promotion of hypocotyl elongation in the dark, by activating the brassinosteroid pathway and stabilizing BZR1. The regulation of BZR1 degradation is dependent on autophagy (PubMed:27345161). Regulates the expression, phosphorylation and ribosome association of MRFs (e.g. MRF1, MRF3 and MRF4), especially under energy-deficient conditions (PubMed:29084871).</text>
</comment>
<comment type="function">
    <text evidence="17 29">(Microbial infection) Binding to cauliflower mosaic virus (CaMV) Tav protein is critical for both translation reinitiation and viral fitness (PubMed:21343906). When activated by CaMV P6, promotes CaMV translation by inhibiting cellular autophagy and suppressing both silencing and innate immunity, thus conferring sensitivity to P.syringae (PubMed:27120694).</text>
</comment>
<comment type="function">
    <text evidence="26">(Microbial infection) Required during infection by some potyvirus such as Watermelon mosaic virus (WMV) but not for turnip mosaic virus (TuMV).</text>
</comment>
<comment type="catalytic activity">
    <reaction evidence="1">
        <text>L-seryl-[protein] + ATP = O-phospho-L-seryl-[protein] + ADP + H(+)</text>
        <dbReference type="Rhea" id="RHEA:17989"/>
        <dbReference type="Rhea" id="RHEA-COMP:9863"/>
        <dbReference type="Rhea" id="RHEA-COMP:11604"/>
        <dbReference type="ChEBI" id="CHEBI:15378"/>
        <dbReference type="ChEBI" id="CHEBI:29999"/>
        <dbReference type="ChEBI" id="CHEBI:30616"/>
        <dbReference type="ChEBI" id="CHEBI:83421"/>
        <dbReference type="ChEBI" id="CHEBI:456216"/>
        <dbReference type="EC" id="2.7.11.1"/>
    </reaction>
</comment>
<comment type="catalytic activity">
    <reaction evidence="1">
        <text>L-threonyl-[protein] + ATP = O-phospho-L-threonyl-[protein] + ADP + H(+)</text>
        <dbReference type="Rhea" id="RHEA:46608"/>
        <dbReference type="Rhea" id="RHEA-COMP:11060"/>
        <dbReference type="Rhea" id="RHEA-COMP:11605"/>
        <dbReference type="ChEBI" id="CHEBI:15378"/>
        <dbReference type="ChEBI" id="CHEBI:30013"/>
        <dbReference type="ChEBI" id="CHEBI:30616"/>
        <dbReference type="ChEBI" id="CHEBI:61977"/>
        <dbReference type="ChEBI" id="CHEBI:456216"/>
        <dbReference type="EC" id="2.7.11.1"/>
    </reaction>
</comment>
<comment type="activity regulation">
    <text evidence="23 25 26 27 28 31">Almost insensitive to rapamycin (PubMed:23963679). Strongly repressed by specific active site inhibitors (asTORis) such as AZD-8055, TORIN2 and WYE-132, and, to a lesser extent, by KU63794, WYE-354 and TORIN1, leading to impaired photoautotrophic growth and abnormally early meristematic cells differentiation (PubMed:23524850, PubMed:23963679). Repression by TORIN1 leads to impaired responses to auxin, including gravitropism (PubMed:23524850). Combined treatment with rapamycin and active-site inhibitors (e.g. Torin1 and AZD-8055) results in synergistic inhibition of activity and plant growth (PubMed:27479935). Inhibition by KU63794 leads to reduced auxin content in root tips (PubMed:27014314). AZD-8055 treatment reduces abscisic acid (ABA) levels (PubMed:26459592). In addition, inhibition by AZD-8055 leads to a strong reduction of watermelon mosaic virus (WMV) infection (PubMed:25979731).</text>
</comment>
<comment type="subunit">
    <text evidence="11 16 17 19 20">Interacts with RAPTOR1 and itself. Interacts with FKBP12 in a rapamycin-dependent manner. Binds to LST8-1 (PubMed:22307851). Hyperactivated upon interaction with cauliflower mosaic virus (CaMV) Tav protein (PubMed:21343906).</text>
</comment>
<comment type="interaction">
    <interactant intactId="EBI-1382370">
        <id>Q9FR53</id>
    </interactant>
    <interactant intactId="EBI-1635551">
        <id>O49160</id>
        <label>TIF3C1</label>
    </interactant>
    <organismsDiffer>false</organismsDiffer>
    <experiments>3</experiments>
</comment>
<comment type="interaction">
    <interactant intactId="EBI-1382370">
        <id>Q9FR53</id>
    </interactant>
    <interactant intactId="EBI-6961">
        <id>P20081</id>
        <label>FPR1</label>
    </interactant>
    <organismsDiffer>true</organismsDiffer>
    <experiments>3</experiments>
</comment>
<comment type="interaction">
    <interactant intactId="EBI-1382370">
        <id>Q9FR53</id>
    </interactant>
    <interactant intactId="EBI-8597718">
        <id>P16666</id>
        <label>ORF VI</label>
    </interactant>
    <organismsDiffer>true</organismsDiffer>
    <experiments>6</experiments>
</comment>
<comment type="subcellular location">
    <subcellularLocation>
        <location evidence="16">Cytoplasm</location>
    </subcellularLocation>
    <subcellularLocation>
        <location evidence="6 16">Nucleus</location>
    </subcellularLocation>
    <text evidence="23">Associates to polysomes when activated by auxin or cauliflower mosaic virus (CaMV) Tav protein.</text>
</comment>
<comment type="alternative products">
    <event type="alternative splicing"/>
    <isoform>
        <id>Q9FR53-1</id>
        <name>1</name>
        <sequence type="displayed"/>
    </isoform>
    <text>A number of isoforms are produced. According to EST sequences.</text>
</comment>
<comment type="tissue specificity">
    <text evidence="8 9 10 22">Highly expressed in root meristems, shoot apical meristem (SAM) and floral buds.</text>
</comment>
<comment type="developmental stage">
    <text evidence="8">One day after fertilization, expressed in endosperm, embryo, and the chalazal proliferating tissue. At globular stage, no longer expressed in endosperm, but still in embryo up to the heart and torpedo stages. In mature embryo, expressed in the apical and primary root meristems and dividing vascular tissues. During lateral root formation, expressed in the lateral root primordia and remains during the formation of the emerging secondary root meristem.</text>
</comment>
<comment type="induction">
    <text evidence="23">Activation by auxin triggers recruitment to polysomes which release inactive ATPK1/S6K1.</text>
</comment>
<comment type="domain">
    <text evidence="16">The kinase domain is required for its function.</text>
</comment>
<comment type="PTM">
    <text evidence="23 29">Activated by phosphorylation on Ser-2424 triggered by cauliflower mosaic virus P6 and auxin.</text>
</comment>
<comment type="disruption phenotype">
    <text evidence="8 17 23 24 26 30">Embryo lethality when homozygous. Premature arrest of endosperm and embryo development. RNAi mutant exhibits plant growth arrest and reduced expression of brassinosteroid (BR)-responsive genes, as well as abolished exogenous sugar-mediated promotion of BZR1 accumulation (PubMed:27345161). RNAi plants are impaired in sugar-mediated (e.g. glucose and sucrose) root growth promotion and associated genes expression (PubMed:23542588). In response to auxin, deficient plants have polysomes prebound by inactive ATPK1/S6K1, and loading of uORF-mRNAs and activation TIF3H1/eIF3h are impaired (PubMed:23524850). In RNAi plants, severe alteration of watermelon mosaic virus (WMV) infection, but only slight delay of turnip mosaic virus (TuMV) infection (PubMed:25979731). Deficient plants are resistant to viral infection by cauliflower mosaic virus (CaMV), by failing to support CaMV Tav protein-mediated transactivation of reinitiation (PubMed:21343906).</text>
</comment>
<comment type="miscellaneous">
    <text evidence="12 13 14 16 18 22">Inducible silencing in seedlings or adult plants leads to plant growth arrest. Plants slightly silencing TOR show constitutive autophagy and reduced shoot and root growth, leaf size, seed production and resistance to osmotic stress. Plants overexpressing TOR show increased shoot and root growth, leaf size, seed production and resistance to osmotic stress. Plants expressing FKBP12 (BP12) are sensitive to rapamycin. BP12 plants repressed by rapamycin exhibit slower growth and development leading to poor nutrient uptake and light energy utilization.</text>
</comment>
<comment type="similarity">
    <text evidence="34">Belongs to the PI3/PI4-kinase family.</text>
</comment>
<comment type="sequence caution" evidence="34">
    <conflict type="erroneous gene model prediction">
        <sequence resource="EMBL-CDS" id="AAF76442"/>
    </conflict>
</comment>
<evidence type="ECO:0000250" key="1">
    <source>
        <dbReference type="UniProtKB" id="Q9Y7K2"/>
    </source>
</evidence>
<evidence type="ECO:0000255" key="2"/>
<evidence type="ECO:0000255" key="3">
    <source>
        <dbReference type="PROSITE-ProRule" id="PRU00269"/>
    </source>
</evidence>
<evidence type="ECO:0000255" key="4">
    <source>
        <dbReference type="PROSITE-ProRule" id="PRU00534"/>
    </source>
</evidence>
<evidence type="ECO:0000255" key="5">
    <source>
        <dbReference type="PROSITE-ProRule" id="PRU00535"/>
    </source>
</evidence>
<evidence type="ECO:0000255" key="6">
    <source>
        <dbReference type="PROSITE-ProRule" id="PRU00768"/>
    </source>
</evidence>
<evidence type="ECO:0000256" key="7">
    <source>
        <dbReference type="SAM" id="MobiDB-lite"/>
    </source>
</evidence>
<evidence type="ECO:0000269" key="8">
    <source>
    </source>
</evidence>
<evidence type="ECO:0000269" key="9">
    <source>
    </source>
</evidence>
<evidence type="ECO:0000269" key="10">
    <source>
    </source>
</evidence>
<evidence type="ECO:0000269" key="11">
    <source>
    </source>
</evidence>
<evidence type="ECO:0000269" key="12">
    <source>
    </source>
</evidence>
<evidence type="ECO:0000269" key="13">
    <source>
    </source>
</evidence>
<evidence type="ECO:0000269" key="14">
    <source>
    </source>
</evidence>
<evidence type="ECO:0000269" key="15">
    <source>
    </source>
</evidence>
<evidence type="ECO:0000269" key="16">
    <source>
    </source>
</evidence>
<evidence type="ECO:0000269" key="17">
    <source>
    </source>
</evidence>
<evidence type="ECO:0000269" key="18">
    <source>
    </source>
</evidence>
<evidence type="ECO:0000269" key="19">
    <source>
    </source>
</evidence>
<evidence type="ECO:0000269" key="20">
    <source>
    </source>
</evidence>
<evidence type="ECO:0000269" key="21">
    <source>
    </source>
</evidence>
<evidence type="ECO:0000269" key="22">
    <source>
    </source>
</evidence>
<evidence type="ECO:0000269" key="23">
    <source>
    </source>
</evidence>
<evidence type="ECO:0000269" key="24">
    <source>
    </source>
</evidence>
<evidence type="ECO:0000269" key="25">
    <source>
    </source>
</evidence>
<evidence type="ECO:0000269" key="26">
    <source>
    </source>
</evidence>
<evidence type="ECO:0000269" key="27">
    <source>
    </source>
</evidence>
<evidence type="ECO:0000269" key="28">
    <source>
    </source>
</evidence>
<evidence type="ECO:0000269" key="29">
    <source>
    </source>
</evidence>
<evidence type="ECO:0000269" key="30">
    <source>
    </source>
</evidence>
<evidence type="ECO:0000269" key="31">
    <source>
    </source>
</evidence>
<evidence type="ECO:0000269" key="32">
    <source>
    </source>
</evidence>
<evidence type="ECO:0000303" key="33">
    <source>
    </source>
</evidence>
<evidence type="ECO:0000305" key="34"/>
<evidence type="ECO:0000312" key="35">
    <source>
        <dbReference type="Araport" id="AT1G50030"/>
    </source>
</evidence>
<gene>
    <name evidence="33" type="primary">TOR</name>
    <name evidence="35" type="ordered locus">At1g50030</name>
    <name evidence="34" type="ORF">F2J10.19</name>
</gene>
<organism>
    <name type="scientific">Arabidopsis thaliana</name>
    <name type="common">Mouse-ear cress</name>
    <dbReference type="NCBI Taxonomy" id="3702"/>
    <lineage>
        <taxon>Eukaryota</taxon>
        <taxon>Viridiplantae</taxon>
        <taxon>Streptophyta</taxon>
        <taxon>Embryophyta</taxon>
        <taxon>Tracheophyta</taxon>
        <taxon>Spermatophyta</taxon>
        <taxon>Magnoliopsida</taxon>
        <taxon>eudicotyledons</taxon>
        <taxon>Gunneridae</taxon>
        <taxon>Pentapetalae</taxon>
        <taxon>rosids</taxon>
        <taxon>malvids</taxon>
        <taxon>Brassicales</taxon>
        <taxon>Brassicaceae</taxon>
        <taxon>Camelineae</taxon>
        <taxon>Arabidopsis</taxon>
    </lineage>
</organism>
<protein>
    <recommendedName>
        <fullName evidence="1">Serine/threonine-protein kinase TOR</fullName>
        <ecNumber evidence="1">2.7.11.1</ecNumber>
    </recommendedName>
    <alternativeName>
        <fullName evidence="33">Protein TARGET OF RAPAMYCIN</fullName>
        <shortName evidence="33">AtTOR</shortName>
    </alternativeName>
</protein>
<reference key="1">
    <citation type="journal article" date="2002" name="Proc. Natl. Acad. Sci. U.S.A.">
        <title>Expression and disruption of the Arabidopsis TOR (target of rapamycin) gene.</title>
        <authorList>
            <person name="Menand B."/>
            <person name="Desnos T."/>
            <person name="Nussaume L."/>
            <person name="Berger F."/>
            <person name="Bouchez D."/>
            <person name="Meyer C."/>
            <person name="Robaglia C."/>
        </authorList>
    </citation>
    <scope>NUCLEOTIDE SEQUENCE [MRNA]</scope>
    <scope>FUNCTION</scope>
    <scope>TISSUE SPECIFICITY</scope>
    <scope>DEVELOPMENTAL STAGE</scope>
    <scope>DISRUPTION PHENOTYPE</scope>
    <source>
        <strain>cv. Columbia</strain>
    </source>
</reference>
<reference key="2">
    <citation type="journal article" date="2000" name="Nature">
        <title>Sequence and analysis of chromosome 1 of the plant Arabidopsis thaliana.</title>
        <authorList>
            <person name="Theologis A."/>
            <person name="Ecker J.R."/>
            <person name="Palm C.J."/>
            <person name="Federspiel N.A."/>
            <person name="Kaul S."/>
            <person name="White O."/>
            <person name="Alonso J."/>
            <person name="Altafi H."/>
            <person name="Araujo R."/>
            <person name="Bowman C.L."/>
            <person name="Brooks S.Y."/>
            <person name="Buehler E."/>
            <person name="Chan A."/>
            <person name="Chao Q."/>
            <person name="Chen H."/>
            <person name="Cheuk R.F."/>
            <person name="Chin C.W."/>
            <person name="Chung M.K."/>
            <person name="Conn L."/>
            <person name="Conway A.B."/>
            <person name="Conway A.R."/>
            <person name="Creasy T.H."/>
            <person name="Dewar K."/>
            <person name="Dunn P."/>
            <person name="Etgu P."/>
            <person name="Feldblyum T.V."/>
            <person name="Feng J.-D."/>
            <person name="Fong B."/>
            <person name="Fujii C.Y."/>
            <person name="Gill J.E."/>
            <person name="Goldsmith A.D."/>
            <person name="Haas B."/>
            <person name="Hansen N.F."/>
            <person name="Hughes B."/>
            <person name="Huizar L."/>
            <person name="Hunter J.L."/>
            <person name="Jenkins J."/>
            <person name="Johnson-Hopson C."/>
            <person name="Khan S."/>
            <person name="Khaykin E."/>
            <person name="Kim C.J."/>
            <person name="Koo H.L."/>
            <person name="Kremenetskaia I."/>
            <person name="Kurtz D.B."/>
            <person name="Kwan A."/>
            <person name="Lam B."/>
            <person name="Langin-Hooper S."/>
            <person name="Lee A."/>
            <person name="Lee J.M."/>
            <person name="Lenz C.A."/>
            <person name="Li J.H."/>
            <person name="Li Y.-P."/>
            <person name="Lin X."/>
            <person name="Liu S.X."/>
            <person name="Liu Z.A."/>
            <person name="Luros J.S."/>
            <person name="Maiti R."/>
            <person name="Marziali A."/>
            <person name="Militscher J."/>
            <person name="Miranda M."/>
            <person name="Nguyen M."/>
            <person name="Nierman W.C."/>
            <person name="Osborne B.I."/>
            <person name="Pai G."/>
            <person name="Peterson J."/>
            <person name="Pham P.K."/>
            <person name="Rizzo M."/>
            <person name="Rooney T."/>
            <person name="Rowley D."/>
            <person name="Sakano H."/>
            <person name="Salzberg S.L."/>
            <person name="Schwartz J.R."/>
            <person name="Shinn P."/>
            <person name="Southwick A.M."/>
            <person name="Sun H."/>
            <person name="Tallon L.J."/>
            <person name="Tambunga G."/>
            <person name="Toriumi M.J."/>
            <person name="Town C.D."/>
            <person name="Utterback T."/>
            <person name="Van Aken S."/>
            <person name="Vaysberg M."/>
            <person name="Vysotskaia V.S."/>
            <person name="Walker M."/>
            <person name="Wu D."/>
            <person name="Yu G."/>
            <person name="Fraser C.M."/>
            <person name="Venter J.C."/>
            <person name="Davis R.W."/>
        </authorList>
    </citation>
    <scope>NUCLEOTIDE SEQUENCE [LARGE SCALE GENOMIC DNA]</scope>
    <source>
        <strain>cv. Columbia</strain>
    </source>
</reference>
<reference key="3">
    <citation type="journal article" date="2017" name="Plant J.">
        <title>Araport11: a complete reannotation of the Arabidopsis thaliana reference genome.</title>
        <authorList>
            <person name="Cheng C.Y."/>
            <person name="Krishnakumar V."/>
            <person name="Chan A.P."/>
            <person name="Thibaud-Nissen F."/>
            <person name="Schobel S."/>
            <person name="Town C.D."/>
        </authorList>
    </citation>
    <scope>GENOME REANNOTATION</scope>
    <source>
        <strain>cv. Columbia</strain>
    </source>
</reference>
<reference key="4">
    <citation type="journal article" date="2004" name="Biochem. Soc. Trans.">
        <title>Plant growth: the translational connection.</title>
        <authorList>
            <person name="Robaglia C."/>
            <person name="Menand B."/>
            <person name="Lei Y."/>
            <person name="Sormani R."/>
            <person name="Nicolai M."/>
            <person name="Gery C."/>
            <person name="Teoule E."/>
            <person name="Deprost D."/>
            <person name="Meyer C."/>
        </authorList>
    </citation>
    <scope>TISSUE SPECIFICITY</scope>
</reference>
<reference key="5">
    <citation type="journal article" date="2005" name="Biochem. Biophys. Res. Commun.">
        <title>An Arabidopsis homolog of RAPTOR/KOG1 is essential for early embryo development.</title>
        <authorList>
            <person name="Deprost D."/>
            <person name="Truong H.N."/>
            <person name="Robaglia C."/>
            <person name="Meyer C."/>
        </authorList>
    </citation>
    <scope>TISSUE SPECIFICITY</scope>
</reference>
<reference key="6">
    <citation type="journal article" date="2006" name="Plant Cell">
        <title>Arabidopsis TARGET OF RAPAMYCIN interacts with RAPTOR, which regulates the activity of S6 kinase in response to osmotic stress signals.</title>
        <authorList>
            <person name="Mahfouz M.M."/>
            <person name="Kim S."/>
            <person name="Delauney A.J."/>
            <person name="Verma D.P."/>
        </authorList>
    </citation>
    <scope>FUNCTION</scope>
    <scope>INTERACTION WITH RAPTOR1</scope>
</reference>
<reference key="7">
    <citation type="journal article" date="2007" name="BMC Plant Biol.">
        <title>Saccharomyces cerevisiae FKBP12 binds Arabidopsis thaliana TOR and its expression in plants leads to rapamycin susceptibility.</title>
        <authorList>
            <person name="Sormani R."/>
            <person name="Yao L."/>
            <person name="Menand B."/>
            <person name="Ennar N."/>
            <person name="Lecampion C."/>
            <person name="Meyer C."/>
            <person name="Robaglia C."/>
        </authorList>
    </citation>
    <scope>FUNCTION</scope>
    <scope>MISCELLANEOUS</scope>
</reference>
<reference key="8">
    <citation type="journal article" date="2007" name="EMBO Rep.">
        <title>The Arabidopsis TOR kinase links plant growth, yield, stress resistance and mRNA translation.</title>
        <authorList>
            <person name="Deprost D."/>
            <person name="Yao L."/>
            <person name="Sormani R."/>
            <person name="Moreau M."/>
            <person name="Leterreux G."/>
            <person name="Nicolai M."/>
            <person name="Bedu M."/>
            <person name="Robaglia C."/>
            <person name="Meyer C."/>
        </authorList>
    </citation>
    <scope>FUNCTION</scope>
    <scope>MISCELLANEOUS</scope>
</reference>
<reference key="9">
    <citation type="journal article" date="2010" name="PLoS ONE">
        <title>TOR is a negative regulator of autophagy in Arabidopsis thaliana.</title>
        <authorList>
            <person name="Liu Y."/>
            <person name="Bassham D.C."/>
        </authorList>
    </citation>
    <scope>FUNCTION</scope>
    <scope>MISCELLANEOUS</scope>
</reference>
<reference key="10">
    <citation type="journal article" date="2011" name="Biochem. Soc. Trans.">
        <title>Regulation of plant growth and metabolism by the TOR kinase.</title>
        <authorList>
            <person name="Dobrenel T."/>
            <person name="Marchive C."/>
            <person name="Sormani R."/>
            <person name="Moreau M."/>
            <person name="Mozzo M."/>
            <person name="Montane M.H."/>
            <person name="Menand B."/>
            <person name="Robaglia C."/>
            <person name="Meyer C."/>
        </authorList>
    </citation>
    <scope>FUNCTION</scope>
    <scope>MISCELLANEOUS</scope>
</reference>
<reference key="11">
    <citation type="journal article" date="2011" name="EMBO J.">
        <title>Viral factor TAV recruits TOR/S6K1 signalling to activate reinitiation after long ORF translation.</title>
        <authorList>
            <person name="Schepetilnikov M."/>
            <person name="Kobayashi K."/>
            <person name="Geldreich A."/>
            <person name="Caranta C."/>
            <person name="Robaglia C."/>
            <person name="Keller M."/>
            <person name="Ryabova L.A."/>
        </authorList>
    </citation>
    <scope>FUNCTION</scope>
    <scope>DISRUPTION PHENOTYPE</scope>
    <scope>INTERACTION WITH CAULIFLOWER MOSAIC VIRUS TAV</scope>
    <scope>SUBCELLULAR LOCATION</scope>
    <source>
        <strain>cv. Columbia</strain>
    </source>
</reference>
<reference key="12">
    <citation type="journal article" date="2011" name="Plant Cell">
        <title>The PP2A regulatory subunit Tap46, a component of the TOR signaling pathway, modulates growth and metabolism in plants.</title>
        <authorList>
            <person name="Ahn C.S."/>
            <person name="Han J.-A."/>
            <person name="Lee H.-S."/>
            <person name="Lee S."/>
            <person name="Pai H.-S."/>
        </authorList>
    </citation>
    <scope>FUNCTION</scope>
</reference>
<reference key="13">
    <citation type="journal article" date="2011" name="Plant Physiol.">
        <title>Target of rapamycin regulates development and ribosomal RNA expression through kinase domain in Arabidopsis.</title>
        <authorList>
            <person name="Ren M."/>
            <person name="Qiu S."/>
            <person name="Venglat P."/>
            <person name="Xiang D."/>
            <person name="Feng L."/>
            <person name="Selvaraj G."/>
            <person name="Datla R."/>
        </authorList>
    </citation>
    <scope>FUNCTION</scope>
    <scope>SUBUNIT</scope>
    <scope>SUBCELLULAR LOCATION</scope>
    <scope>DOMAIN</scope>
    <scope>MUTAGENESIS OF 2077-ARG--LYS-2080</scope>
    <scope>MISCELLANEOUS</scope>
</reference>
<reference key="14">
    <citation type="journal article" date="2012" name="J. Biol. Chem.">
        <title>Rapamycin and glucose-target of rapamycin (TOR) protein signaling in plants.</title>
        <authorList>
            <person name="Xiong Y."/>
            <person name="Sheen J."/>
        </authorList>
    </citation>
    <scope>INTERACTION WITH FKBP12</scope>
</reference>
<reference key="15">
    <citation type="journal article" date="2012" name="Plant Cell">
        <title>Mutations in the Arabidopsis homolog of LST8/GbetaL, a partner of the target of Rapamycin kinase, impair plant growth, flowering, and metabolic adaptation to long days.</title>
        <authorList>
            <person name="Moreau M."/>
            <person name="Azzopardi M."/>
            <person name="Clement G."/>
            <person name="Dobrenel T."/>
            <person name="Marchive C."/>
            <person name="Renne C."/>
            <person name="Martin-Magniette M.-L."/>
            <person name="Taconnat L."/>
            <person name="Renou J.-P."/>
            <person name="Robaglia C."/>
            <person name="Meyer C."/>
        </authorList>
    </citation>
    <scope>INTERACTION WITH LST8-1</scope>
</reference>
<reference key="16">
    <citation type="journal article" date="2012" name="Plant Cell">
        <title>Target of rapamycin signaling regulates metabolism, growth, and life span in Arabidopsis.</title>
        <authorList>
            <person name="Ren M."/>
            <person name="Venglat P."/>
            <person name="Qiu S."/>
            <person name="Feng L."/>
            <person name="Cao Y."/>
            <person name="Wang E."/>
            <person name="Xiang D."/>
            <person name="Wang J."/>
            <person name="Alexander D."/>
            <person name="Chalivendra S."/>
            <person name="Logan D."/>
            <person name="Mattoo A."/>
            <person name="Selvaraj G."/>
            <person name="Datla R."/>
        </authorList>
    </citation>
    <scope>FUNCTION</scope>
    <scope>MISCELLANEOUS</scope>
    <scope>TISSUE SPECIFICITY</scope>
</reference>
<reference key="17">
    <citation type="journal article" date="2013" name="Cell Cycle">
        <title>Moving beyond translation: glucose-TOR signaling in the transcriptional control of cell cycle.</title>
        <authorList>
            <person name="Xiong Y."/>
            <person name="Sheen J."/>
        </authorList>
    </citation>
    <scope>REVIEW ON TOR SIGNALING</scope>
</reference>
<reference key="18">
    <citation type="journal article" date="2013" name="EMBO J.">
        <title>TOR and S6K1 promote translation reinitiation of uORF-containing mRNAs via phosphorylation of eIF3h.</title>
        <authorList>
            <person name="Schepetilnikov M."/>
            <person name="Dimitrova M."/>
            <person name="Mancera-Martinez E."/>
            <person name="Geldreich A."/>
            <person name="Keller M."/>
            <person name="Ryabova L.A."/>
        </authorList>
    </citation>
    <scope>FUNCTION</scope>
    <scope>DISRUPTION PHENOTYPE</scope>
    <scope>INDUCTION BY AUXIN</scope>
    <scope>SUBCELLULAR LOCATION</scope>
    <scope>PHOSPHORYLATION AT SER-2424</scope>
    <scope>ACTIVITY REGULATION</scope>
</reference>
<reference key="19">
    <citation type="journal article" date="2013" name="Front. Plant Sci.">
        <title>Sugar metabolism and the plant target of rapamycin kinase: a sweet operaTOR?</title>
        <authorList>
            <person name="Dobrenel T."/>
            <person name="Marchive C."/>
            <person name="Azzopardi M."/>
            <person name="Clement G."/>
            <person name="Moreau M."/>
            <person name="Sormani R."/>
            <person name="Robaglia C."/>
            <person name="Meyer C."/>
        </authorList>
    </citation>
    <scope>REVIEW</scope>
</reference>
<reference key="20">
    <citation type="journal article" date="2013" name="J. Exp. Bot.">
        <title>ATP-competitive mTOR kinase inhibitors delay plant growth by triggering early differentiation of meristematic cells but no developmental patterning change.</title>
        <authorList>
            <person name="Montane M.-H."/>
            <person name="Menand B."/>
        </authorList>
    </citation>
    <scope>ACTIVITY REGULATION</scope>
    <source>
        <strain>cv. Columbia</strain>
        <strain>cv. Wassilewskija</strain>
    </source>
</reference>
<reference key="21">
    <citation type="journal article" date="2013" name="Nature">
        <title>Glucose-TOR signalling reprograms the transcriptome and activates meristems.</title>
        <authorList>
            <person name="Xiong Y."/>
            <person name="McCormack M."/>
            <person name="Li L."/>
            <person name="Hall Q."/>
            <person name="Xiang C."/>
            <person name="Sheen J."/>
        </authorList>
    </citation>
    <scope>FUNCTION</scope>
    <scope>DISRUPTION PHENOTYPE</scope>
    <source>
        <strain>cv. Columbia</strain>
    </source>
</reference>
<reference key="22">
    <citation type="journal article" date="2013" name="Plant J.">
        <title>Systemic analysis of inducible target of rapamycin mutants reveal a general metabolic switch controlling growth in Arabidopsis thaliana.</title>
        <authorList>
            <person name="Caldana C."/>
            <person name="Li Y."/>
            <person name="Leisse A."/>
            <person name="Zhang Y."/>
            <person name="Bartholomaeus L."/>
            <person name="Fernie A.R."/>
            <person name="Willmitzer L."/>
            <person name="Giavalisco P."/>
        </authorList>
    </citation>
    <scope>FUNCTION</scope>
</reference>
<reference key="23">
    <citation type="journal article" date="2013" name="Trends Plant Sci.">
        <title>Arabidopsis PPP family of serine/threonine protein phosphatases: many targets but few engines.</title>
        <authorList>
            <person name="Uhrig R.G."/>
            <person name="Labandera A.-M."/>
            <person name="Moorhead G.B."/>
        </authorList>
    </citation>
    <scope>REVIEW ON KINASES</scope>
</reference>
<reference key="24">
    <citation type="journal article" date="2014" name="J. Exp. Bot.">
        <title>Balancing act: matching growth with environment by the TOR signalling pathway.</title>
        <authorList>
            <person name="Henriques R."/>
            <person name="Boegre L."/>
            <person name="Horvath B."/>
            <person name="Magyar Z."/>
        </authorList>
    </citation>
    <scope>REVIEW ON TOR PATHWAY</scope>
</reference>
<reference key="25">
    <citation type="journal article" date="2014" name="J. Plant Biol.">
        <title>Master regulators in plant glucose signaling networks.</title>
        <authorList>
            <person name="Sheen J."/>
        </authorList>
    </citation>
    <scope>REVIEW ON GLUCOSE SIGNALING</scope>
</reference>
<reference key="26">
    <citation type="journal article" date="2015" name="Biochem. Biophys. Res. Commun.">
        <title>Mutations in the Arabidopsis Lst8 and Raptor genes encoding partners of the TOR complex, or inhibition of TOR activity decrease abscisic acid (ABA) synthesis.</title>
        <authorList>
            <person name="Kravchenko A."/>
            <person name="Citerne S."/>
            <person name="Jehanno I."/>
            <person name="Bersimbaev R.I."/>
            <person name="Veit B."/>
            <person name="Meyer C."/>
            <person name="Leprince A.S."/>
        </authorList>
    </citation>
    <scope>FUNCTION</scope>
    <scope>ACTIVITY REGULATION</scope>
    <source>
        <strain>cv. Col-8</strain>
    </source>
</reference>
<reference key="27">
    <citation type="journal article" date="2015" name="J. Gen. Virol.">
        <title>Potyviruses differ in their requirement for TOR signalling.</title>
        <authorList>
            <person name="Ouibrahim L."/>
            <person name="Rubio A.G."/>
            <person name="Moretti A."/>
            <person name="Montane M.H."/>
            <person name="Menand B."/>
            <person name="Meyer C."/>
            <person name="Robaglia C."/>
            <person name="Caranta C."/>
        </authorList>
    </citation>
    <scope>FUNCTION</scope>
    <scope>DISRUPTION PHENOTYPE</scope>
    <scope>ACTIVITY REGULATION</scope>
</reference>
<reference key="28">
    <citation type="journal article" date="2016" name="Curr. Biol.">
        <title>TOR signaling promotes accumulation of BZR1 to balance growth with carbon availability in Arabidopsis.</title>
        <authorList>
            <person name="Zhang Z."/>
            <person name="Zhu J.-Y."/>
            <person name="Roh J."/>
            <person name="Marchive C."/>
            <person name="Kim S.-K."/>
            <person name="Meyer C."/>
            <person name="Sun Y."/>
            <person name="Wang W."/>
            <person name="Wang Z.-Y."/>
        </authorList>
    </citation>
    <scope>FUNCTION</scope>
    <scope>DISRUPTION PHENOTYPE</scope>
    <source>
        <strain>cv. Columbia</strain>
    </source>
</reference>
<reference key="29">
    <citation type="journal article" date="2016" name="Front. Plant Sci.">
        <title>Target of rapamycin is a key player for auxin signaling transduction in Arabidopsis.</title>
        <authorList>
            <person name="Deng K."/>
            <person name="Yu L."/>
            <person name="Zheng X."/>
            <person name="Zhang K."/>
            <person name="Wang W."/>
            <person name="Dong P."/>
            <person name="Zhang J."/>
            <person name="Ren M."/>
        </authorList>
    </citation>
    <scope>FUNCTION IN AUXIN SIGNALING</scope>
    <scope>ACTIVITY REGULATION</scope>
    <source>
        <strain>cv. Columbia</strain>
    </source>
</reference>
<reference key="30">
    <citation type="journal article" date="2016" name="New Phytol.">
        <title>Viral protein suppresses oxidative burst and salicylic acid-dependent autophagy and facilitates bacterial growth on virus-infected plants.</title>
        <authorList>
            <person name="Zvereva A.S."/>
            <person name="Golyaev V."/>
            <person name="Turco S."/>
            <person name="Gubaeva E.G."/>
            <person name="Rajeswaran R."/>
            <person name="Schepetilnikov M.V."/>
            <person name="Srour O."/>
            <person name="Ryabova L.A."/>
            <person name="Boller T."/>
            <person name="Pooggin M.M."/>
        </authorList>
    </citation>
    <scope>FUNCTION</scope>
    <scope>ACTIVATION CAULIFLOWER MOSAIC VIRUS P6</scope>
    <source>
        <strain>cv. Columbia</strain>
    </source>
</reference>
<reference key="31">
    <citation type="journal article" date="2017" name="New Phytol.">
        <title>Brassinosteriod Insensitive 2 (BIN2) acts as a downstream effector of the Target of Rapamycin (TOR) signaling pathway to regulate photoautotrophic growth in Arabidopsis.</title>
        <authorList>
            <person name="Xiong F."/>
            <person name="Zhang R."/>
            <person name="Meng Z."/>
            <person name="Deng K."/>
            <person name="Que Y."/>
            <person name="Zhuo F."/>
            <person name="Feng L."/>
            <person name="Guo S."/>
            <person name="Datla R."/>
            <person name="Ren M."/>
        </authorList>
    </citation>
    <scope>FUNCTION</scope>
    <scope>ACTIVITY REGULATION</scope>
    <source>
        <strain>cv. Columbia</strain>
    </source>
</reference>
<reference key="32">
    <citation type="journal article" date="2017" name="Plant Cell">
        <title>MRF family genes are involved in translation control, especially under energy-deficient conditions, and their expression and functions are modulated by the TOR signaling pathway.</title>
        <authorList>
            <person name="Lee D.-H."/>
            <person name="Park S.J."/>
            <person name="Ahn C.S."/>
            <person name="Pai H.-S."/>
        </authorList>
    </citation>
    <scope>FUNCTION</scope>
    <source>
        <strain>cv. Columbia</strain>
    </source>
</reference>
<name>TOR_ARATH</name>
<sequence>MSTSSQSFVAGRPASMASPSQSHRFCGPSATASGGGSFDTLNRVIADLCSRGNPKEGAPLAFRKHVEEAVRDLSGEASSRFMEQLYDRIANLIESTDVAENMGALRAIDELTEIGFGENATKVSRFAGYMRTVFELKRDPEILVLASRVLGHLARAGGAMTSDEVEFQMKTAFDWLRVDRVEYRRFAAVLILKEMAENASTVFNVHVPEFVDAIWVALRDPQLQVRERAVEALRACLRVIEKRETRWRVQWYYRMFEATQDGLGRNAPVHSIHGSLLAVGELLRNTGEFMMSRYREVAEIVLRYLEHRDRLVRLSITSLLPRIAHFLRDRFVTNYLTICMNHILTVLRIPAERASGFIALGEMAGALDGELIHYLPTIMSHLRDAIAPRKGRPLLEAVACVGNIAKAMGSTVETHVRDLLDVMFSSSLSSTLVDALDQITISIPSLLPTVQDRLLDCISLVLSKSHYSQAKPPVTIVRGSTVGMAPQSSDPSCSAQVQLALQTLARFNFKGHDLLEFARESVVVYLDDEDAATRKDAALCCCRLIANSLSGITQFGSSRSTRAGGRRRRLVEEIVEKLLRTAVADADVTVRKSIFVALFGNQCFDDYLAQADSLTAIFASLNDEDLDVREYAISVAGRLSEKNPAYVLPALRRHLIQLLTYLELSADNKCREESAKLLGCLVRNCERLILPYVAPVQKALVARLSEGTGVNANNNIVTGVLVTVGDLARVGGLAMRQYIPELMPLIVEALMDGAAVAKREVAVSTLGQVVQSTGYVVTPYKEYPLLLGLLLKLLKGDLVWSTRREVLKVLGIMGALDPHVHKRNQQSLSGSHGEVPRGTGDSGQPIPSIDELPVELRPSFATSEDYYSTVAINSLMRILRDASLLSYHKRVVRSLMIIFKSMGLGCVPYLPKVLPELFHTVRTSDENLKDFITWGLGTLVSIVRQHIRKYLPELLSLVSELWSSFTLPGPIRPSRGLPVLHLLEHLCLALNDEFRTYLPVILPCFIQVLGDAERFNDYTYVPDILHTLEVFGGTLDEHMHLLLPALIRLFKVDAPVAIRRDAIKTLTRVIPCVQVTGHISALVHHLKLVLDGKNDELRKDAVDALCCLAHALGEDFTIFIESIHKLLLKHRLRHKEFEEIHARWRRREPLIVATTATQQLSRRLPVEVIRDPVIENEIDPFEEGTDRNHQVNDGRLRTAGEASQRSTKEDWEEWMRHFSIELLKESPSPALRTCAKLAQLQPFVGRELFAAGFVSCWAQLNESSQKQLVRSLEMAFSSPNIPPEILATLLNLAEFMEHDEKPLPIDIRLLGALAEKCRVFAKALHYKEMEFEGPRSKRMDANPVAVVEALIHINNQLHQHEAAVGILTYAQQHLDVQLKESWYEKLQRWDDALKAYTLKASQTTNPHLVLEATLGQMRCLAALARWEELNNLCKEYWSPAEPSARLEMAPMAAQAAWNMGEWDQMAEYVSRLDDGDETKLRGLASPVSSGDGSSNGTFFRAVLLVRRAKYDEAREYVERARKCLATELAALVLESYERAYSNMVRVQQLSELEEVIEYYTLPVGNTIAEERRALIRNMWTQRIQGSKRNVEVWQALLAVRALVLPPTEDVETWLKFASLCRKSGRISQAKSTLLKLLPFDPEVSPENMQYHGPPQVMLGYLKYQWSLGEERKRKEAFTKLQILTRELSSVPHSQSDILASMVSSKGANVPLLARVNLKLGTWQWALSSGLNDGSIQEIRDAFDKSTCYAPKWAKAWHTWALFNTAVMSHYISRGQIASQYVVSAVTGYFYSIACAANAKGVDDSLQDILRLLTLWFNHGATADVQTALKTGFSHVNINTWLVVLPQIIARIHSNNRAVRELIQSLLIRIGENHPQALMYPLLVACKSISNLRRAAAQEVVDKVRQHSGALVDQAQLVSHELIRVAILWHEMWHEALEEASRLYFGEHNIEGMLKVLEPLHDMLDEGVKKDSTTIQERAFIEAYRHELKEAHECCCNYKITGKDAELTQAWDLYYHVFKRIDKQLASLTTLDLESVSPELLLCRDLELAVPGTYRADAPVVTISSFSRQLVVITSKQRPRKLTIHGNDGEDYAFLLKGHEDLRQDERVMQLFGLVNTLLENSRKTAEKDLSIQRYSVIPLSPNSGLIGWVPNCDTLHHLIREHRDARKIILNQENKHMLSFAPDYDNLPLIAKVEVFEYALENTEGNDLSRVLWLKSRSSEVWLERRTNYTRSLAVMSMVGYILGLGDRHPSNLMLHRYSGKILHIDFGDCFEASMNREKFPEKVPFRLTRMLVKAMEVSGIEGNFRSTCENVMQVLRTNKDSVMAMMEAFVHDPLINWRLFNFNEVPQLALLGNNNPNAPADVEPDEEDEDPADIDLPQPQRSTREKEILQAVNMLGDANEVLNERAVVVMARMSHKLTGRDFSSSAIPSNPIADHNNLLGGDSHEVEHGLSVKVQVQKLINQATSHENLCQNYVGWCPFW</sequence>
<feature type="chain" id="PRO_0000409330" description="Serine/threonine-protein kinase TOR">
    <location>
        <begin position="1"/>
        <end position="2481"/>
    </location>
</feature>
<feature type="repeat" description="HEAT 1" evidence="2">
    <location>
        <begin position="205"/>
        <end position="242"/>
    </location>
</feature>
<feature type="repeat" description="HEAT 2" evidence="2">
    <location>
        <begin position="292"/>
        <end position="329"/>
    </location>
</feature>
<feature type="repeat" description="HEAT 3" evidence="2">
    <location>
        <begin position="373"/>
        <end position="410"/>
    </location>
</feature>
<feature type="repeat" description="HEAT 4" evidence="2">
    <location>
        <begin position="434"/>
        <end position="471"/>
    </location>
</feature>
<feature type="repeat" description="HEAT 5" evidence="2">
    <location>
        <begin position="569"/>
        <end position="607"/>
    </location>
</feature>
<feature type="repeat" description="HEAT 6" evidence="2">
    <location>
        <begin position="608"/>
        <end position="645"/>
    </location>
</feature>
<feature type="repeat" description="HEAT 7" evidence="2">
    <location>
        <begin position="737"/>
        <end position="775"/>
    </location>
</feature>
<feature type="repeat" description="HEAT 8" evidence="2">
    <location>
        <begin position="781"/>
        <end position="819"/>
    </location>
</feature>
<feature type="repeat" description="HEAT 9" evidence="2">
    <location>
        <begin position="866"/>
        <end position="904"/>
    </location>
</feature>
<feature type="repeat" description="HEAT 10" evidence="2">
    <location>
        <begin position="908"/>
        <end position="945"/>
    </location>
</feature>
<feature type="repeat" description="HEAT 11" evidence="2">
    <location>
        <begin position="952"/>
        <end position="992"/>
    </location>
</feature>
<feature type="repeat" description="HEAT 12" evidence="2">
    <location>
        <begin position="996"/>
        <end position="1036"/>
    </location>
</feature>
<feature type="repeat" description="HEAT 13" evidence="2">
    <location>
        <begin position="1037"/>
        <end position="1075"/>
    </location>
</feature>
<feature type="repeat" description="HEAT 14" evidence="2">
    <location>
        <begin position="1077"/>
        <end position="1114"/>
    </location>
</feature>
<feature type="domain" description="FAT" evidence="4">
    <location>
        <begin position="1309"/>
        <end position="1887"/>
    </location>
</feature>
<feature type="domain" description="PI3K/PI4K catalytic" evidence="3">
    <location>
        <begin position="2065"/>
        <end position="2378"/>
    </location>
</feature>
<feature type="domain" description="FATC" evidence="4 5">
    <location>
        <begin position="2449"/>
        <end position="2481"/>
    </location>
</feature>
<feature type="region of interest" description="Disordered" evidence="7">
    <location>
        <begin position="1"/>
        <end position="31"/>
    </location>
</feature>
<feature type="region of interest" description="Disordered" evidence="7">
    <location>
        <begin position="823"/>
        <end position="847"/>
    </location>
</feature>
<feature type="region of interest" description="Disordered" evidence="7">
    <location>
        <begin position="1179"/>
        <end position="1204"/>
    </location>
</feature>
<feature type="region of interest" description="G-loop" evidence="3">
    <location>
        <begin position="2071"/>
        <end position="2077"/>
    </location>
</feature>
<feature type="region of interest" description="Catalytic loop" evidence="3">
    <location>
        <begin position="2244"/>
        <end position="2252"/>
    </location>
</feature>
<feature type="region of interest" description="Activation loop" evidence="3">
    <location>
        <begin position="2264"/>
        <end position="2289"/>
    </location>
</feature>
<feature type="region of interest" description="Disordered" evidence="7">
    <location>
        <begin position="2354"/>
        <end position="2384"/>
    </location>
</feature>
<feature type="short sequence motif" description="Nuclear localization signal" evidence="6">
    <location>
        <begin position="1505"/>
        <end position="1512"/>
    </location>
</feature>
<feature type="short sequence motif" description="Nuclear localization signal" evidence="34">
    <location>
        <begin position="2075"/>
        <end position="2080"/>
    </location>
</feature>
<feature type="compositionally biased region" description="Basic and acidic residues" evidence="7">
    <location>
        <begin position="1184"/>
        <end position="1198"/>
    </location>
</feature>
<feature type="compositionally biased region" description="Acidic residues" evidence="7">
    <location>
        <begin position="2363"/>
        <end position="2374"/>
    </location>
</feature>
<feature type="modified residue" description="Phosphoserine" evidence="23">
    <location>
        <position position="2424"/>
    </location>
</feature>
<feature type="mutagenesis site" description="Loss of nuclear localization." evidence="16">
    <location>
        <begin position="2077"/>
        <end position="2080"/>
    </location>
</feature>